<gene>
    <name evidence="1" type="primary">dtd</name>
    <name type="ordered locus">IL2448</name>
</gene>
<reference key="1">
    <citation type="journal article" date="2004" name="Proc. Natl. Acad. Sci. U.S.A.">
        <title>Genome sequence of the deep-sea gamma-proteobacterium Idiomarina loihiensis reveals amino acid fermentation as a source of carbon and energy.</title>
        <authorList>
            <person name="Hou S."/>
            <person name="Saw J.H."/>
            <person name="Lee K.S."/>
            <person name="Freitas T.A."/>
            <person name="Belisle C."/>
            <person name="Kawarabayasi Y."/>
            <person name="Donachie S.P."/>
            <person name="Pikina A."/>
            <person name="Galperin M.Y."/>
            <person name="Koonin E.V."/>
            <person name="Makarova K.S."/>
            <person name="Omelchenko M.V."/>
            <person name="Sorokin A."/>
            <person name="Wolf Y.I."/>
            <person name="Li Q.X."/>
            <person name="Keum Y.S."/>
            <person name="Campbell S."/>
            <person name="Denery J."/>
            <person name="Aizawa S."/>
            <person name="Shibata S."/>
            <person name="Malahoff A."/>
            <person name="Alam M."/>
        </authorList>
    </citation>
    <scope>NUCLEOTIDE SEQUENCE [LARGE SCALE GENOMIC DNA]</scope>
    <source>
        <strain>ATCC BAA-735 / DSM 15497 / L2-TR</strain>
    </source>
</reference>
<dbReference type="EC" id="3.1.1.96" evidence="1"/>
<dbReference type="EMBL" id="AE017340">
    <property type="protein sequence ID" value="AAV83280.1"/>
    <property type="molecule type" value="Genomic_DNA"/>
</dbReference>
<dbReference type="RefSeq" id="WP_011235673.1">
    <property type="nucleotide sequence ID" value="NC_006512.1"/>
</dbReference>
<dbReference type="SMR" id="Q5QV32"/>
<dbReference type="STRING" id="283942.IL2448"/>
<dbReference type="GeneID" id="41337642"/>
<dbReference type="KEGG" id="ilo:IL2448"/>
<dbReference type="eggNOG" id="COG1490">
    <property type="taxonomic scope" value="Bacteria"/>
</dbReference>
<dbReference type="HOGENOM" id="CLU_076901_1_1_6"/>
<dbReference type="OrthoDB" id="9801395at2"/>
<dbReference type="Proteomes" id="UP000001171">
    <property type="component" value="Chromosome"/>
</dbReference>
<dbReference type="GO" id="GO:0005737">
    <property type="term" value="C:cytoplasm"/>
    <property type="evidence" value="ECO:0007669"/>
    <property type="project" value="UniProtKB-SubCell"/>
</dbReference>
<dbReference type="GO" id="GO:0051500">
    <property type="term" value="F:D-tyrosyl-tRNA(Tyr) deacylase activity"/>
    <property type="evidence" value="ECO:0007669"/>
    <property type="project" value="TreeGrafter"/>
</dbReference>
<dbReference type="GO" id="GO:0106026">
    <property type="term" value="F:Gly-tRNA(Ala) deacylase activity"/>
    <property type="evidence" value="ECO:0007669"/>
    <property type="project" value="UniProtKB-UniRule"/>
</dbReference>
<dbReference type="GO" id="GO:0043908">
    <property type="term" value="F:Ser(Gly)-tRNA(Ala) hydrolase activity"/>
    <property type="evidence" value="ECO:0007669"/>
    <property type="project" value="UniProtKB-UniRule"/>
</dbReference>
<dbReference type="GO" id="GO:0000049">
    <property type="term" value="F:tRNA binding"/>
    <property type="evidence" value="ECO:0007669"/>
    <property type="project" value="UniProtKB-UniRule"/>
</dbReference>
<dbReference type="GO" id="GO:0019478">
    <property type="term" value="P:D-amino acid catabolic process"/>
    <property type="evidence" value="ECO:0007669"/>
    <property type="project" value="UniProtKB-UniRule"/>
</dbReference>
<dbReference type="CDD" id="cd00563">
    <property type="entry name" value="Dtyr_deacylase"/>
    <property type="match status" value="1"/>
</dbReference>
<dbReference type="FunFam" id="3.50.80.10:FF:000001">
    <property type="entry name" value="D-aminoacyl-tRNA deacylase"/>
    <property type="match status" value="1"/>
</dbReference>
<dbReference type="Gene3D" id="3.50.80.10">
    <property type="entry name" value="D-tyrosyl-tRNA(Tyr) deacylase"/>
    <property type="match status" value="1"/>
</dbReference>
<dbReference type="HAMAP" id="MF_00518">
    <property type="entry name" value="Deacylase_Dtd"/>
    <property type="match status" value="1"/>
</dbReference>
<dbReference type="InterPro" id="IPR003732">
    <property type="entry name" value="Daa-tRNA_deacyls_DTD"/>
</dbReference>
<dbReference type="InterPro" id="IPR023509">
    <property type="entry name" value="DTD-like_sf"/>
</dbReference>
<dbReference type="NCBIfam" id="TIGR00256">
    <property type="entry name" value="D-aminoacyl-tRNA deacylase"/>
    <property type="match status" value="1"/>
</dbReference>
<dbReference type="PANTHER" id="PTHR10472:SF5">
    <property type="entry name" value="D-AMINOACYL-TRNA DEACYLASE 1"/>
    <property type="match status" value="1"/>
</dbReference>
<dbReference type="PANTHER" id="PTHR10472">
    <property type="entry name" value="D-TYROSYL-TRNA TYR DEACYLASE"/>
    <property type="match status" value="1"/>
</dbReference>
<dbReference type="Pfam" id="PF02580">
    <property type="entry name" value="Tyr_Deacylase"/>
    <property type="match status" value="1"/>
</dbReference>
<dbReference type="SUPFAM" id="SSF69500">
    <property type="entry name" value="DTD-like"/>
    <property type="match status" value="1"/>
</dbReference>
<evidence type="ECO:0000255" key="1">
    <source>
        <dbReference type="HAMAP-Rule" id="MF_00518"/>
    </source>
</evidence>
<accession>Q5QV32</accession>
<protein>
    <recommendedName>
        <fullName evidence="1">D-aminoacyl-tRNA deacylase</fullName>
        <shortName evidence="1">DTD</shortName>
        <ecNumber evidence="1">3.1.1.96</ecNumber>
    </recommendedName>
    <alternativeName>
        <fullName evidence="1">Gly-tRNA(Ala) deacylase</fullName>
    </alternativeName>
</protein>
<keyword id="KW-0963">Cytoplasm</keyword>
<keyword id="KW-0378">Hydrolase</keyword>
<keyword id="KW-1185">Reference proteome</keyword>
<keyword id="KW-0694">RNA-binding</keyword>
<keyword id="KW-0820">tRNA-binding</keyword>
<sequence>MIGLIQRVSRAKVTVADELVGSIGPGLLILLGVEHKDDEASAAKLAQRIANYRVFSDVEDKMNNSVIDAQGEVLVVSQFTLAADTRKGRRPSFSSAATPDQAQHLYQVFCEQMAAQGLPVKTGRFAADMQVELVNDGPVTFELKV</sequence>
<comment type="function">
    <text evidence="1">An aminoacyl-tRNA editing enzyme that deacylates mischarged D-aminoacyl-tRNAs. Also deacylates mischarged glycyl-tRNA(Ala), protecting cells against glycine mischarging by AlaRS. Acts via tRNA-based rather than protein-based catalysis; rejects L-amino acids rather than detecting D-amino acids in the active site. By recycling D-aminoacyl-tRNA to D-amino acids and free tRNA molecules, this enzyme counteracts the toxicity associated with the formation of D-aminoacyl-tRNA entities in vivo and helps enforce protein L-homochirality.</text>
</comment>
<comment type="catalytic activity">
    <reaction evidence="1">
        <text>glycyl-tRNA(Ala) + H2O = tRNA(Ala) + glycine + H(+)</text>
        <dbReference type="Rhea" id="RHEA:53744"/>
        <dbReference type="Rhea" id="RHEA-COMP:9657"/>
        <dbReference type="Rhea" id="RHEA-COMP:13640"/>
        <dbReference type="ChEBI" id="CHEBI:15377"/>
        <dbReference type="ChEBI" id="CHEBI:15378"/>
        <dbReference type="ChEBI" id="CHEBI:57305"/>
        <dbReference type="ChEBI" id="CHEBI:78442"/>
        <dbReference type="ChEBI" id="CHEBI:78522"/>
        <dbReference type="EC" id="3.1.1.96"/>
    </reaction>
</comment>
<comment type="catalytic activity">
    <reaction evidence="1">
        <text>a D-aminoacyl-tRNA + H2O = a tRNA + a D-alpha-amino acid + H(+)</text>
        <dbReference type="Rhea" id="RHEA:13953"/>
        <dbReference type="Rhea" id="RHEA-COMP:10123"/>
        <dbReference type="Rhea" id="RHEA-COMP:10124"/>
        <dbReference type="ChEBI" id="CHEBI:15377"/>
        <dbReference type="ChEBI" id="CHEBI:15378"/>
        <dbReference type="ChEBI" id="CHEBI:59871"/>
        <dbReference type="ChEBI" id="CHEBI:78442"/>
        <dbReference type="ChEBI" id="CHEBI:79333"/>
        <dbReference type="EC" id="3.1.1.96"/>
    </reaction>
</comment>
<comment type="subunit">
    <text evidence="1">Homodimer.</text>
</comment>
<comment type="subcellular location">
    <subcellularLocation>
        <location evidence="1">Cytoplasm</location>
    </subcellularLocation>
</comment>
<comment type="domain">
    <text evidence="1">A Gly-cisPro motif from one monomer fits into the active site of the other monomer to allow specific chiral rejection of L-amino acids.</text>
</comment>
<comment type="similarity">
    <text evidence="1">Belongs to the DTD family.</text>
</comment>
<proteinExistence type="inferred from homology"/>
<name>DTD_IDILO</name>
<feature type="chain" id="PRO_0000164547" description="D-aminoacyl-tRNA deacylase">
    <location>
        <begin position="1"/>
        <end position="145"/>
    </location>
</feature>
<feature type="short sequence motif" description="Gly-cisPro motif, important for rejection of L-amino acids" evidence="1">
    <location>
        <begin position="137"/>
        <end position="138"/>
    </location>
</feature>
<organism>
    <name type="scientific">Idiomarina loihiensis (strain ATCC BAA-735 / DSM 15497 / L2-TR)</name>
    <dbReference type="NCBI Taxonomy" id="283942"/>
    <lineage>
        <taxon>Bacteria</taxon>
        <taxon>Pseudomonadati</taxon>
        <taxon>Pseudomonadota</taxon>
        <taxon>Gammaproteobacteria</taxon>
        <taxon>Alteromonadales</taxon>
        <taxon>Idiomarinaceae</taxon>
        <taxon>Idiomarina</taxon>
    </lineage>
</organism>